<organism>
    <name type="scientific">Prochlorococcus marinus (strain MIT 9313)</name>
    <dbReference type="NCBI Taxonomy" id="74547"/>
    <lineage>
        <taxon>Bacteria</taxon>
        <taxon>Bacillati</taxon>
        <taxon>Cyanobacteriota</taxon>
        <taxon>Cyanophyceae</taxon>
        <taxon>Synechococcales</taxon>
        <taxon>Prochlorococcaceae</taxon>
        <taxon>Prochlorococcus</taxon>
    </lineage>
</organism>
<protein>
    <recommendedName>
        <fullName evidence="1">Tryptophan synthase beta chain</fullName>
        <ecNumber evidence="1">4.2.1.20</ecNumber>
    </recommendedName>
</protein>
<gene>
    <name evidence="1" type="primary">trpB</name>
    <name type="ordered locus">PMT_2027</name>
</gene>
<dbReference type="EC" id="4.2.1.20" evidence="1"/>
<dbReference type="EMBL" id="BX548175">
    <property type="protein sequence ID" value="CAE22201.1"/>
    <property type="molecule type" value="Genomic_DNA"/>
</dbReference>
<dbReference type="SMR" id="Q7TUL2"/>
<dbReference type="KEGG" id="pmt:PMT_2027"/>
<dbReference type="eggNOG" id="COG0133">
    <property type="taxonomic scope" value="Bacteria"/>
</dbReference>
<dbReference type="HOGENOM" id="CLU_016734_3_1_3"/>
<dbReference type="UniPathway" id="UPA00035">
    <property type="reaction ID" value="UER00044"/>
</dbReference>
<dbReference type="Proteomes" id="UP000001423">
    <property type="component" value="Chromosome"/>
</dbReference>
<dbReference type="GO" id="GO:0005737">
    <property type="term" value="C:cytoplasm"/>
    <property type="evidence" value="ECO:0007669"/>
    <property type="project" value="TreeGrafter"/>
</dbReference>
<dbReference type="GO" id="GO:0004834">
    <property type="term" value="F:tryptophan synthase activity"/>
    <property type="evidence" value="ECO:0007669"/>
    <property type="project" value="UniProtKB-UniRule"/>
</dbReference>
<dbReference type="CDD" id="cd06446">
    <property type="entry name" value="Trp-synth_B"/>
    <property type="match status" value="1"/>
</dbReference>
<dbReference type="FunFam" id="3.40.50.1100:FF:000001">
    <property type="entry name" value="Tryptophan synthase beta chain"/>
    <property type="match status" value="1"/>
</dbReference>
<dbReference type="FunFam" id="3.40.50.1100:FF:000004">
    <property type="entry name" value="Tryptophan synthase beta chain"/>
    <property type="match status" value="1"/>
</dbReference>
<dbReference type="Gene3D" id="3.40.50.1100">
    <property type="match status" value="2"/>
</dbReference>
<dbReference type="HAMAP" id="MF_00133">
    <property type="entry name" value="Trp_synth_beta"/>
    <property type="match status" value="1"/>
</dbReference>
<dbReference type="InterPro" id="IPR006653">
    <property type="entry name" value="Trp_synth_b_CS"/>
</dbReference>
<dbReference type="InterPro" id="IPR006654">
    <property type="entry name" value="Trp_synth_beta"/>
</dbReference>
<dbReference type="InterPro" id="IPR023026">
    <property type="entry name" value="Trp_synth_beta/beta-like"/>
</dbReference>
<dbReference type="InterPro" id="IPR001926">
    <property type="entry name" value="TrpB-like_PALP"/>
</dbReference>
<dbReference type="InterPro" id="IPR036052">
    <property type="entry name" value="TrpB-like_PALP_sf"/>
</dbReference>
<dbReference type="NCBIfam" id="TIGR00263">
    <property type="entry name" value="trpB"/>
    <property type="match status" value="1"/>
</dbReference>
<dbReference type="PANTHER" id="PTHR48077:SF3">
    <property type="entry name" value="TRYPTOPHAN SYNTHASE"/>
    <property type="match status" value="1"/>
</dbReference>
<dbReference type="PANTHER" id="PTHR48077">
    <property type="entry name" value="TRYPTOPHAN SYNTHASE-RELATED"/>
    <property type="match status" value="1"/>
</dbReference>
<dbReference type="Pfam" id="PF00291">
    <property type="entry name" value="PALP"/>
    <property type="match status" value="1"/>
</dbReference>
<dbReference type="PIRSF" id="PIRSF001413">
    <property type="entry name" value="Trp_syn_beta"/>
    <property type="match status" value="1"/>
</dbReference>
<dbReference type="SUPFAM" id="SSF53686">
    <property type="entry name" value="Tryptophan synthase beta subunit-like PLP-dependent enzymes"/>
    <property type="match status" value="1"/>
</dbReference>
<dbReference type="PROSITE" id="PS00168">
    <property type="entry name" value="TRP_SYNTHASE_BETA"/>
    <property type="match status" value="1"/>
</dbReference>
<keyword id="KW-0028">Amino-acid biosynthesis</keyword>
<keyword id="KW-0057">Aromatic amino acid biosynthesis</keyword>
<keyword id="KW-0456">Lyase</keyword>
<keyword id="KW-0663">Pyridoxal phosphate</keyword>
<keyword id="KW-1185">Reference proteome</keyword>
<keyword id="KW-0822">Tryptophan biosynthesis</keyword>
<proteinExistence type="inferred from homology"/>
<name>TRPB_PROMM</name>
<comment type="function">
    <text evidence="1">The beta subunit is responsible for the synthesis of L-tryptophan from indole and L-serine.</text>
</comment>
<comment type="catalytic activity">
    <reaction evidence="1">
        <text>(1S,2R)-1-C-(indol-3-yl)glycerol 3-phosphate + L-serine = D-glyceraldehyde 3-phosphate + L-tryptophan + H2O</text>
        <dbReference type="Rhea" id="RHEA:10532"/>
        <dbReference type="ChEBI" id="CHEBI:15377"/>
        <dbReference type="ChEBI" id="CHEBI:33384"/>
        <dbReference type="ChEBI" id="CHEBI:57912"/>
        <dbReference type="ChEBI" id="CHEBI:58866"/>
        <dbReference type="ChEBI" id="CHEBI:59776"/>
        <dbReference type="EC" id="4.2.1.20"/>
    </reaction>
</comment>
<comment type="cofactor">
    <cofactor evidence="1">
        <name>pyridoxal 5'-phosphate</name>
        <dbReference type="ChEBI" id="CHEBI:597326"/>
    </cofactor>
</comment>
<comment type="pathway">
    <text evidence="1">Amino-acid biosynthesis; L-tryptophan biosynthesis; L-tryptophan from chorismate: step 5/5.</text>
</comment>
<comment type="subunit">
    <text evidence="1">Tetramer of two alpha and two beta chains.</text>
</comment>
<comment type="similarity">
    <text evidence="1">Belongs to the TrpB family.</text>
</comment>
<feature type="chain" id="PRO_0000098979" description="Tryptophan synthase beta chain">
    <location>
        <begin position="1"/>
        <end position="436"/>
    </location>
</feature>
<feature type="modified residue" description="N6-(pyridoxal phosphate)lysine" evidence="1">
    <location>
        <position position="129"/>
    </location>
</feature>
<evidence type="ECO:0000255" key="1">
    <source>
        <dbReference type="HAMAP-Rule" id="MF_00133"/>
    </source>
</evidence>
<sequence length="436" mass="46618">MLLGVILSIPRLVLFLPGVPVTSTLPSQPKDADLAVSARPSAQGRFGRYGGQYVPETLMPALAELEQAAALAWKDPAFTAELDRLLRSYVGRATPLYEAERLTAHYCRSDGGPRIWLKREDLNHTGAHKINNALGQALLALRMGKKRIIAETGAGQHGVATATVCARFGLECVVYMGAEDMRRQALNVFRMRLLGATVQPVTAGTATLKDATSEAIRDWVTNVETTHYILGSVAGPHPYPMLVRDFHAVIGQEARQQCAEAFGRLPDVLLACVGGGSNAMGLFHPFVQDRSVRMIGVEAAGDGVETGRHAATITEGRVGVLHGAMSLLLQDDEGQVQEAHSISAGLDYPGVGPEHSYLCEIGRAEYAAVSDQQALDALRLVSELEGIIPALETAHAFAWLETLCPTLAAGTEVVINCSGRGDKDVNTVAEKLGNQL</sequence>
<accession>Q7TUL2</accession>
<reference key="1">
    <citation type="journal article" date="2003" name="Nature">
        <title>Genome divergence in two Prochlorococcus ecotypes reflects oceanic niche differentiation.</title>
        <authorList>
            <person name="Rocap G."/>
            <person name="Larimer F.W."/>
            <person name="Lamerdin J.E."/>
            <person name="Malfatti S."/>
            <person name="Chain P."/>
            <person name="Ahlgren N.A."/>
            <person name="Arellano A."/>
            <person name="Coleman M."/>
            <person name="Hauser L."/>
            <person name="Hess W.R."/>
            <person name="Johnson Z.I."/>
            <person name="Land M.L."/>
            <person name="Lindell D."/>
            <person name="Post A.F."/>
            <person name="Regala W."/>
            <person name="Shah M."/>
            <person name="Shaw S.L."/>
            <person name="Steglich C."/>
            <person name="Sullivan M.B."/>
            <person name="Ting C.S."/>
            <person name="Tolonen A."/>
            <person name="Webb E.A."/>
            <person name="Zinser E.R."/>
            <person name="Chisholm S.W."/>
        </authorList>
    </citation>
    <scope>NUCLEOTIDE SEQUENCE [LARGE SCALE GENOMIC DNA]</scope>
    <source>
        <strain>MIT 9313</strain>
    </source>
</reference>